<name>FABH_XANC8</name>
<gene>
    <name evidence="1 3" type="primary">fabH</name>
    <name type="ordered locus">XC_3229</name>
</gene>
<sequence length="325" mass="34692">MSKRIYSRIAGTGSYLPEKVLTNDDMSKIVDTSDEWIRSRTGIRERHIVADDQTTSDLAYFASLKAMEAAGVTADEIDLIVVGTTTPDLIFPSTACLLQARLGNVGCGAFDVNAACSGFVYALSVADKFVRSGDAKTVLVVGAETLTRIVDWTDRTTCVLFGDGAGAVVLKADEDTGILSTHLHADGSKKELLWDPVGVSVGFGEGKNGGGALLMKGNDVFKYAVKALDSVVDETLAANGLDTHDLDWLIPHQANLRIIEATAKRLDLPMEQVVVTVDRHGNTSSASVLLALDEAVRSGRVQRGQLLLLEAFGGGFTWGSALLRY</sequence>
<feature type="chain" id="PRO_1000056444" description="Beta-ketoacyl-[acyl-carrier-protein] synthase III">
    <location>
        <begin position="1"/>
        <end position="325"/>
    </location>
</feature>
<feature type="region of interest" description="ACP-binding" evidence="1">
    <location>
        <begin position="253"/>
        <end position="257"/>
    </location>
</feature>
<feature type="active site" evidence="1">
    <location>
        <position position="116"/>
    </location>
</feature>
<feature type="active site" evidence="1">
    <location>
        <position position="252"/>
    </location>
</feature>
<feature type="active site" evidence="1">
    <location>
        <position position="282"/>
    </location>
</feature>
<dbReference type="EC" id="2.3.1.180" evidence="1 2"/>
<dbReference type="EC" id="2.3.1.300" evidence="2"/>
<dbReference type="EMBL" id="CP000050">
    <property type="protein sequence ID" value="AAY50273.1"/>
    <property type="molecule type" value="Genomic_DNA"/>
</dbReference>
<dbReference type="RefSeq" id="WP_011269971.1">
    <property type="nucleotide sequence ID" value="NC_007086.1"/>
</dbReference>
<dbReference type="SMR" id="Q4URQ0"/>
<dbReference type="KEGG" id="xcb:XC_3229"/>
<dbReference type="HOGENOM" id="CLU_039592_3_1_6"/>
<dbReference type="BRENDA" id="2.3.1.300">
    <property type="organism ID" value="9230"/>
</dbReference>
<dbReference type="UniPathway" id="UPA00094"/>
<dbReference type="Proteomes" id="UP000000420">
    <property type="component" value="Chromosome"/>
</dbReference>
<dbReference type="GO" id="GO:0005737">
    <property type="term" value="C:cytoplasm"/>
    <property type="evidence" value="ECO:0007669"/>
    <property type="project" value="UniProtKB-SubCell"/>
</dbReference>
<dbReference type="GO" id="GO:0004315">
    <property type="term" value="F:3-oxoacyl-[acyl-carrier-protein] synthase activity"/>
    <property type="evidence" value="ECO:0007669"/>
    <property type="project" value="InterPro"/>
</dbReference>
<dbReference type="GO" id="GO:0033818">
    <property type="term" value="F:beta-ketoacyl-acyl-carrier-protein synthase III activity"/>
    <property type="evidence" value="ECO:0007669"/>
    <property type="project" value="UniProtKB-UniRule"/>
</dbReference>
<dbReference type="GO" id="GO:0061990">
    <property type="term" value="F:beta-ketodecanoyl-[acyl-carrier-protein] synthase activity"/>
    <property type="evidence" value="ECO:0007669"/>
    <property type="project" value="RHEA"/>
</dbReference>
<dbReference type="GO" id="GO:0006633">
    <property type="term" value="P:fatty acid biosynthetic process"/>
    <property type="evidence" value="ECO:0007669"/>
    <property type="project" value="UniProtKB-UniRule"/>
</dbReference>
<dbReference type="CDD" id="cd00830">
    <property type="entry name" value="KAS_III"/>
    <property type="match status" value="1"/>
</dbReference>
<dbReference type="FunFam" id="3.40.47.10:FF:000004">
    <property type="entry name" value="3-oxoacyl-[acyl-carrier-protein] synthase 3"/>
    <property type="match status" value="1"/>
</dbReference>
<dbReference type="Gene3D" id="3.40.47.10">
    <property type="match status" value="1"/>
</dbReference>
<dbReference type="HAMAP" id="MF_01815">
    <property type="entry name" value="FabH"/>
    <property type="match status" value="1"/>
</dbReference>
<dbReference type="InterPro" id="IPR013747">
    <property type="entry name" value="ACP_syn_III_C"/>
</dbReference>
<dbReference type="InterPro" id="IPR013751">
    <property type="entry name" value="ACP_syn_III_N"/>
</dbReference>
<dbReference type="InterPro" id="IPR004655">
    <property type="entry name" value="FabH"/>
</dbReference>
<dbReference type="InterPro" id="IPR016039">
    <property type="entry name" value="Thiolase-like"/>
</dbReference>
<dbReference type="NCBIfam" id="TIGR00747">
    <property type="entry name" value="fabH"/>
    <property type="match status" value="1"/>
</dbReference>
<dbReference type="NCBIfam" id="NF006829">
    <property type="entry name" value="PRK09352.1"/>
    <property type="match status" value="1"/>
</dbReference>
<dbReference type="PANTHER" id="PTHR43091">
    <property type="entry name" value="3-OXOACYL-[ACYL-CARRIER-PROTEIN] SYNTHASE"/>
    <property type="match status" value="1"/>
</dbReference>
<dbReference type="PANTHER" id="PTHR43091:SF1">
    <property type="entry name" value="BETA-KETOACYL-[ACYL-CARRIER-PROTEIN] SYNTHASE III, CHLOROPLASTIC"/>
    <property type="match status" value="1"/>
</dbReference>
<dbReference type="Pfam" id="PF08545">
    <property type="entry name" value="ACP_syn_III"/>
    <property type="match status" value="1"/>
</dbReference>
<dbReference type="Pfam" id="PF08541">
    <property type="entry name" value="ACP_syn_III_C"/>
    <property type="match status" value="1"/>
</dbReference>
<dbReference type="SUPFAM" id="SSF53901">
    <property type="entry name" value="Thiolase-like"/>
    <property type="match status" value="1"/>
</dbReference>
<keyword id="KW-0012">Acyltransferase</keyword>
<keyword id="KW-0963">Cytoplasm</keyword>
<keyword id="KW-0275">Fatty acid biosynthesis</keyword>
<keyword id="KW-0276">Fatty acid metabolism</keyword>
<keyword id="KW-0444">Lipid biosynthesis</keyword>
<keyword id="KW-0443">Lipid metabolism</keyword>
<keyword id="KW-0511">Multifunctional enzyme</keyword>
<keyword id="KW-0808">Transferase</keyword>
<comment type="function">
    <text evidence="2">Catalyzes the condensation reaction of fatty acid synthesis by the addition to an acyl acceptor of two carbons from malonyl-ACP. Catalyzes the first condensation reaction which initiates fatty acid synthesis and may therefore play a role in governing the total rate of fatty acid production. Possesses both acetoacetyl-ACP synthase and acetyl transacylase activities (PubMed:27595587). Can use a wide range of acyl-CoAs as the primer substrate in vitro, with a slight preference for short, medium-straight chain acyl-CoAs (PubMed:27595587). Can also use branched-chain acyl-CoAs and acetyl-CoA (PubMed:27595587).</text>
</comment>
<comment type="catalytic activity">
    <reaction evidence="2">
        <text>butanoyl-CoA + malonyl-[ACP] + H(+) = 3-oxohexanoyl-[ACP] + CO2 + CoA</text>
        <dbReference type="Rhea" id="RHEA:42248"/>
        <dbReference type="Rhea" id="RHEA-COMP:9623"/>
        <dbReference type="Rhea" id="RHEA-COMP:9629"/>
        <dbReference type="ChEBI" id="CHEBI:15378"/>
        <dbReference type="ChEBI" id="CHEBI:16526"/>
        <dbReference type="ChEBI" id="CHEBI:57287"/>
        <dbReference type="ChEBI" id="CHEBI:57371"/>
        <dbReference type="ChEBI" id="CHEBI:78449"/>
        <dbReference type="ChEBI" id="CHEBI:78456"/>
    </reaction>
    <physiologicalReaction direction="left-to-right" evidence="2">
        <dbReference type="Rhea" id="RHEA:42249"/>
    </physiologicalReaction>
</comment>
<comment type="catalytic activity">
    <reaction evidence="2">
        <text>hexanoyl-CoA + malonyl-[ACP] + H(+) = 3-oxooctanoyl-[ACP] + CO2 + CoA</text>
        <dbReference type="Rhea" id="RHEA:42256"/>
        <dbReference type="Rhea" id="RHEA-COMP:9623"/>
        <dbReference type="Rhea" id="RHEA-COMP:9633"/>
        <dbReference type="ChEBI" id="CHEBI:15378"/>
        <dbReference type="ChEBI" id="CHEBI:16526"/>
        <dbReference type="ChEBI" id="CHEBI:57287"/>
        <dbReference type="ChEBI" id="CHEBI:62620"/>
        <dbReference type="ChEBI" id="CHEBI:78449"/>
        <dbReference type="ChEBI" id="CHEBI:78460"/>
    </reaction>
    <physiologicalReaction direction="left-to-right" evidence="2">
        <dbReference type="Rhea" id="RHEA:42257"/>
    </physiologicalReaction>
</comment>
<comment type="catalytic activity">
    <reaction evidence="2">
        <text>octanoyl-CoA + malonyl-[ACP] + H(+) = 3-oxodecanoyl-[ACP] + CO2 + CoA</text>
        <dbReference type="Rhea" id="RHEA:42264"/>
        <dbReference type="Rhea" id="RHEA-COMP:9623"/>
        <dbReference type="Rhea" id="RHEA-COMP:9637"/>
        <dbReference type="ChEBI" id="CHEBI:15378"/>
        <dbReference type="ChEBI" id="CHEBI:16526"/>
        <dbReference type="ChEBI" id="CHEBI:57287"/>
        <dbReference type="ChEBI" id="CHEBI:57386"/>
        <dbReference type="ChEBI" id="CHEBI:78449"/>
        <dbReference type="ChEBI" id="CHEBI:78464"/>
    </reaction>
    <physiologicalReaction direction="left-to-right" evidence="2">
        <dbReference type="Rhea" id="RHEA:42265"/>
    </physiologicalReaction>
</comment>
<comment type="catalytic activity">
    <reaction evidence="2">
        <text>decanoyl-CoA + malonyl-[ACP] + H(+) = 3-oxododecanoyl-[ACP] + CO2 + CoA</text>
        <dbReference type="Rhea" id="RHEA:43652"/>
        <dbReference type="Rhea" id="RHEA-COMP:9623"/>
        <dbReference type="Rhea" id="RHEA-COMP:9641"/>
        <dbReference type="ChEBI" id="CHEBI:15378"/>
        <dbReference type="ChEBI" id="CHEBI:16526"/>
        <dbReference type="ChEBI" id="CHEBI:57287"/>
        <dbReference type="ChEBI" id="CHEBI:61430"/>
        <dbReference type="ChEBI" id="CHEBI:78449"/>
        <dbReference type="ChEBI" id="CHEBI:78469"/>
    </reaction>
    <physiologicalReaction direction="left-to-right" evidence="2">
        <dbReference type="Rhea" id="RHEA:43653"/>
    </physiologicalReaction>
</comment>
<comment type="catalytic activity">
    <reaction evidence="2">
        <text>2-methylpropanoyl-CoA + malonyl-[ACP] + H(+) = 4-methyl-3-oxopentanoyl-[ACP] + CO2 + CoA</text>
        <dbReference type="Rhea" id="RHEA:42268"/>
        <dbReference type="Rhea" id="RHEA-COMP:9623"/>
        <dbReference type="Rhea" id="RHEA-COMP:9940"/>
        <dbReference type="ChEBI" id="CHEBI:15378"/>
        <dbReference type="ChEBI" id="CHEBI:16526"/>
        <dbReference type="ChEBI" id="CHEBI:57287"/>
        <dbReference type="ChEBI" id="CHEBI:57338"/>
        <dbReference type="ChEBI" id="CHEBI:78449"/>
        <dbReference type="ChEBI" id="CHEBI:78820"/>
        <dbReference type="EC" id="2.3.1.300"/>
    </reaction>
    <physiologicalReaction direction="left-to-right" evidence="2">
        <dbReference type="Rhea" id="RHEA:42269"/>
    </physiologicalReaction>
</comment>
<comment type="catalytic activity">
    <reaction evidence="2">
        <text>3-methylbutanoyl-CoA + malonyl-[ACP] + H(+) = 5-methyl-3-oxohexanoyl-[ACP] + CO2 + CoA</text>
        <dbReference type="Rhea" id="RHEA:42272"/>
        <dbReference type="Rhea" id="RHEA-COMP:9623"/>
        <dbReference type="Rhea" id="RHEA-COMP:9941"/>
        <dbReference type="ChEBI" id="CHEBI:15378"/>
        <dbReference type="ChEBI" id="CHEBI:16526"/>
        <dbReference type="ChEBI" id="CHEBI:57287"/>
        <dbReference type="ChEBI" id="CHEBI:57345"/>
        <dbReference type="ChEBI" id="CHEBI:78449"/>
        <dbReference type="ChEBI" id="CHEBI:78822"/>
        <dbReference type="EC" id="2.3.1.300"/>
    </reaction>
    <physiologicalReaction direction="left-to-right" evidence="2">
        <dbReference type="Rhea" id="RHEA:42273"/>
    </physiologicalReaction>
</comment>
<comment type="catalytic activity">
    <reaction evidence="1 2">
        <text>malonyl-[ACP] + acetyl-CoA + H(+) = 3-oxobutanoyl-[ACP] + CO2 + CoA</text>
        <dbReference type="Rhea" id="RHEA:12080"/>
        <dbReference type="Rhea" id="RHEA-COMP:9623"/>
        <dbReference type="Rhea" id="RHEA-COMP:9625"/>
        <dbReference type="ChEBI" id="CHEBI:15378"/>
        <dbReference type="ChEBI" id="CHEBI:16526"/>
        <dbReference type="ChEBI" id="CHEBI:57287"/>
        <dbReference type="ChEBI" id="CHEBI:57288"/>
        <dbReference type="ChEBI" id="CHEBI:78449"/>
        <dbReference type="ChEBI" id="CHEBI:78450"/>
        <dbReference type="EC" id="2.3.1.180"/>
    </reaction>
    <physiologicalReaction direction="left-to-right" evidence="2">
        <dbReference type="Rhea" id="RHEA:12081"/>
    </physiologicalReaction>
</comment>
<comment type="pathway">
    <text evidence="1 5">Lipid metabolism; fatty acid biosynthesis.</text>
</comment>
<comment type="subunit">
    <text evidence="1">Homodimer.</text>
</comment>
<comment type="subcellular location">
    <subcellularLocation>
        <location evidence="1">Cytoplasm</location>
    </subcellularLocation>
</comment>
<comment type="domain">
    <text evidence="1">The last Arg residue of the ACP-binding site is essential for the weak association between ACP/AcpP and FabH.</text>
</comment>
<comment type="disruption phenotype">
    <text evidence="2">Essential, cannot be deleted (PubMed:27595587). Replacement of the gene with E.coli fabH causes loss of Xanthomonas ability to synthesize branched-chain fatty acids (BCFAs), but the mutant can grow in either enriched or minimal media, even though it grows slower than the wild-type strain (PubMed:27595587). Mutant with E.coli fabH loses the ability to produce cis-11-methyl-2-dodecenoic acid, a diffusible signal factor (DSF) required for quorum sensing, and exhibits reduced virulence (PubMed:27595587).</text>
</comment>
<comment type="similarity">
    <text evidence="1">Belongs to the thiolase-like superfamily. FabH family.</text>
</comment>
<reference key="1">
    <citation type="journal article" date="2005" name="Genome Res.">
        <title>Comparative and functional genomic analyses of the pathogenicity of phytopathogen Xanthomonas campestris pv. campestris.</title>
        <authorList>
            <person name="Qian W."/>
            <person name="Jia Y."/>
            <person name="Ren S.-X."/>
            <person name="He Y.-Q."/>
            <person name="Feng J.-X."/>
            <person name="Lu L.-F."/>
            <person name="Sun Q."/>
            <person name="Ying G."/>
            <person name="Tang D.-J."/>
            <person name="Tang H."/>
            <person name="Wu W."/>
            <person name="Hao P."/>
            <person name="Wang L."/>
            <person name="Jiang B.-L."/>
            <person name="Zeng S."/>
            <person name="Gu W.-Y."/>
            <person name="Lu G."/>
            <person name="Rong L."/>
            <person name="Tian Y."/>
            <person name="Yao Z."/>
            <person name="Fu G."/>
            <person name="Chen B."/>
            <person name="Fang R."/>
            <person name="Qiang B."/>
            <person name="Chen Z."/>
            <person name="Zhao G.-P."/>
            <person name="Tang J.-L."/>
            <person name="He C."/>
        </authorList>
    </citation>
    <scope>NUCLEOTIDE SEQUENCE [LARGE SCALE GENOMIC DNA]</scope>
    <source>
        <strain>8004</strain>
    </source>
</reference>
<reference key="2">
    <citation type="journal article" date="2016" name="Sci. Rep.">
        <title>Xanthomonas campestris FabH is required for branched-chain fatty acid and DSF-family quorum sensing signal biosynthesis.</title>
        <authorList>
            <person name="Yu Y.H."/>
            <person name="Hu Z."/>
            <person name="Dong H.J."/>
            <person name="Ma J.C."/>
            <person name="Wang H.H."/>
        </authorList>
    </citation>
    <scope>FUNCTION</scope>
    <scope>CATALYTIC ACTIVITY</scope>
    <scope>DISRUPTION PHENOTYPE</scope>
    <source>
        <strain>8004</strain>
    </source>
</reference>
<evidence type="ECO:0000255" key="1">
    <source>
        <dbReference type="HAMAP-Rule" id="MF_01815"/>
    </source>
</evidence>
<evidence type="ECO:0000269" key="2">
    <source>
    </source>
</evidence>
<evidence type="ECO:0000303" key="3">
    <source>
    </source>
</evidence>
<evidence type="ECO:0000305" key="4"/>
<evidence type="ECO:0000305" key="5">
    <source>
    </source>
</evidence>
<accession>Q4URQ0</accession>
<protein>
    <recommendedName>
        <fullName evidence="1">Beta-ketoacyl-[acyl-carrier-protein] synthase III</fullName>
        <shortName evidence="1">Beta-ketoacyl-ACP synthase III</shortName>
        <shortName evidence="1">KAS III</shortName>
        <ecNumber evidence="1 2">2.3.1.180</ecNumber>
        <ecNumber evidence="2">2.3.1.300</ecNumber>
    </recommendedName>
    <alternativeName>
        <fullName evidence="1">3-oxoacyl-[acyl-carrier-protein] synthase 3</fullName>
    </alternativeName>
    <alternativeName>
        <fullName evidence="1">3-oxoacyl-[acyl-carrier-protein] synthase III</fullName>
    </alternativeName>
    <alternativeName>
        <fullName evidence="4">Branched-chain beta-ketoacyl-[acyl-carrier-protein] synthase</fullName>
    </alternativeName>
</protein>
<organism>
    <name type="scientific">Xanthomonas campestris pv. campestris (strain 8004)</name>
    <dbReference type="NCBI Taxonomy" id="314565"/>
    <lineage>
        <taxon>Bacteria</taxon>
        <taxon>Pseudomonadati</taxon>
        <taxon>Pseudomonadota</taxon>
        <taxon>Gammaproteobacteria</taxon>
        <taxon>Lysobacterales</taxon>
        <taxon>Lysobacteraceae</taxon>
        <taxon>Xanthomonas</taxon>
    </lineage>
</organism>
<proteinExistence type="evidence at protein level"/>